<reference key="1">
    <citation type="journal article" date="2007" name="PLoS Genet.">
        <title>Meningococcal genetic variation mechanisms viewed through comparative analysis of serogroup C strain FAM18.</title>
        <authorList>
            <person name="Bentley S.D."/>
            <person name="Vernikos G.S."/>
            <person name="Snyder L.A.S."/>
            <person name="Churcher C."/>
            <person name="Arrowsmith C."/>
            <person name="Chillingworth T."/>
            <person name="Cronin A."/>
            <person name="Davis P.H."/>
            <person name="Holroyd N.E."/>
            <person name="Jagels K."/>
            <person name="Maddison M."/>
            <person name="Moule S."/>
            <person name="Rabbinowitsch E."/>
            <person name="Sharp S."/>
            <person name="Unwin L."/>
            <person name="Whitehead S."/>
            <person name="Quail M.A."/>
            <person name="Achtman M."/>
            <person name="Barrell B.G."/>
            <person name="Saunders N.J."/>
            <person name="Parkhill J."/>
        </authorList>
    </citation>
    <scope>NUCLEOTIDE SEQUENCE [LARGE SCALE GENOMIC DNA]</scope>
    <source>
        <strain>ATCC 700532 / DSM 15464 / FAM18</strain>
    </source>
</reference>
<sequence length="295" mass="32987">MYTGRFAPSPTGLLHIGSLLTAAASYADARSNGGKWLVRMEDLDPPREMPGAASHILHTLEAFGFEWDGEVAYQSRRYALYEETLCRLQTAGLVYPCHCSRKDWQAAAVHGADGFVYNGRCRNPQQRPALQGKQPAWRIRVPDRDIGFSDGIVGGYAQNLARDIGDFVLLRADGYWAYQLAVVADDAEQGVTHIVRGQDLLVSTPRQIYLQQCLGVPTPQYAHLPLLTNAQGQKWSKQTLAPALDLNRREQLLRQVFRYLKLPEAPETDRPAELLDWAVAHWDMGKVPKHAITTP</sequence>
<name>GLUQ_NEIMF</name>
<keyword id="KW-0030">Aminoacyl-tRNA synthetase</keyword>
<keyword id="KW-0067">ATP-binding</keyword>
<keyword id="KW-0436">Ligase</keyword>
<keyword id="KW-0479">Metal-binding</keyword>
<keyword id="KW-0547">Nucleotide-binding</keyword>
<keyword id="KW-0862">Zinc</keyword>
<gene>
    <name evidence="1" type="primary">gluQ</name>
    <name type="ordered locus">NMC1820</name>
</gene>
<feature type="chain" id="PRO_1000024358" description="Glutamyl-Q tRNA(Asp) synthetase">
    <location>
        <begin position="1"/>
        <end position="295"/>
    </location>
</feature>
<feature type="short sequence motif" description="'HIGH' region">
    <location>
        <begin position="8"/>
        <end position="18"/>
    </location>
</feature>
<feature type="short sequence motif" description="'KMSKS' region">
    <location>
        <begin position="234"/>
        <end position="238"/>
    </location>
</feature>
<feature type="binding site" evidence="1">
    <location>
        <begin position="5"/>
        <end position="9"/>
    </location>
    <ligand>
        <name>L-glutamate</name>
        <dbReference type="ChEBI" id="CHEBI:29985"/>
    </ligand>
</feature>
<feature type="binding site" evidence="1">
    <location>
        <position position="41"/>
    </location>
    <ligand>
        <name>L-glutamate</name>
        <dbReference type="ChEBI" id="CHEBI:29985"/>
    </ligand>
</feature>
<feature type="binding site" evidence="1">
    <location>
        <position position="97"/>
    </location>
    <ligand>
        <name>Zn(2+)</name>
        <dbReference type="ChEBI" id="CHEBI:29105"/>
    </ligand>
</feature>
<feature type="binding site" evidence="1">
    <location>
        <position position="99"/>
    </location>
    <ligand>
        <name>Zn(2+)</name>
        <dbReference type="ChEBI" id="CHEBI:29105"/>
    </ligand>
</feature>
<feature type="binding site" evidence="1">
    <location>
        <position position="117"/>
    </location>
    <ligand>
        <name>Zn(2+)</name>
        <dbReference type="ChEBI" id="CHEBI:29105"/>
    </ligand>
</feature>
<feature type="binding site" evidence="1">
    <location>
        <position position="121"/>
    </location>
    <ligand>
        <name>Zn(2+)</name>
        <dbReference type="ChEBI" id="CHEBI:29105"/>
    </ligand>
</feature>
<feature type="binding site" evidence="1">
    <location>
        <position position="178"/>
    </location>
    <ligand>
        <name>L-glutamate</name>
        <dbReference type="ChEBI" id="CHEBI:29985"/>
    </ligand>
</feature>
<feature type="binding site" evidence="1">
    <location>
        <position position="196"/>
    </location>
    <ligand>
        <name>L-glutamate</name>
        <dbReference type="ChEBI" id="CHEBI:29985"/>
    </ligand>
</feature>
<feature type="binding site" evidence="1">
    <location>
        <position position="237"/>
    </location>
    <ligand>
        <name>ATP</name>
        <dbReference type="ChEBI" id="CHEBI:30616"/>
    </ligand>
</feature>
<evidence type="ECO:0000255" key="1">
    <source>
        <dbReference type="HAMAP-Rule" id="MF_01428"/>
    </source>
</evidence>
<protein>
    <recommendedName>
        <fullName evidence="1">Glutamyl-Q tRNA(Asp) synthetase</fullName>
        <shortName evidence="1">Glu-Q-RSs</shortName>
        <ecNumber evidence="1">6.1.1.-</ecNumber>
    </recommendedName>
</protein>
<comment type="function">
    <text evidence="1">Catalyzes the tRNA-independent activation of glutamate in presence of ATP and the subsequent transfer of glutamate onto a tRNA(Asp). Glutamate is transferred on the 2-amino-5-(4,5-dihydroxy-2-cyclopenten-1-yl) moiety of the queuosine in the wobble position of the QUC anticodon.</text>
</comment>
<comment type="cofactor">
    <cofactor evidence="1">
        <name>Zn(2+)</name>
        <dbReference type="ChEBI" id="CHEBI:29105"/>
    </cofactor>
    <text evidence="1">Binds 1 zinc ion per subunit.</text>
</comment>
<comment type="similarity">
    <text evidence="1">Belongs to the class-I aminoacyl-tRNA synthetase family. GluQ subfamily.</text>
</comment>
<dbReference type="EC" id="6.1.1.-" evidence="1"/>
<dbReference type="EMBL" id="AM421808">
    <property type="protein sequence ID" value="CAM10990.1"/>
    <property type="molecule type" value="Genomic_DNA"/>
</dbReference>
<dbReference type="SMR" id="A1KVT5"/>
<dbReference type="KEGG" id="nmc:NMC1820"/>
<dbReference type="HOGENOM" id="CLU_015768_0_1_4"/>
<dbReference type="Proteomes" id="UP000002286">
    <property type="component" value="Chromosome"/>
</dbReference>
<dbReference type="GO" id="GO:0005829">
    <property type="term" value="C:cytosol"/>
    <property type="evidence" value="ECO:0007669"/>
    <property type="project" value="TreeGrafter"/>
</dbReference>
<dbReference type="GO" id="GO:0005524">
    <property type="term" value="F:ATP binding"/>
    <property type="evidence" value="ECO:0007669"/>
    <property type="project" value="UniProtKB-KW"/>
</dbReference>
<dbReference type="GO" id="GO:0004818">
    <property type="term" value="F:glutamate-tRNA ligase activity"/>
    <property type="evidence" value="ECO:0007669"/>
    <property type="project" value="TreeGrafter"/>
</dbReference>
<dbReference type="GO" id="GO:0008270">
    <property type="term" value="F:zinc ion binding"/>
    <property type="evidence" value="ECO:0007669"/>
    <property type="project" value="UniProtKB-UniRule"/>
</dbReference>
<dbReference type="GO" id="GO:0006424">
    <property type="term" value="P:glutamyl-tRNA aminoacylation"/>
    <property type="evidence" value="ECO:0007669"/>
    <property type="project" value="InterPro"/>
</dbReference>
<dbReference type="GO" id="GO:0006400">
    <property type="term" value="P:tRNA modification"/>
    <property type="evidence" value="ECO:0007669"/>
    <property type="project" value="InterPro"/>
</dbReference>
<dbReference type="FunFam" id="3.40.50.620:FF:000093">
    <property type="entry name" value="Glutamyl-Q tRNA(Asp) synthetase"/>
    <property type="match status" value="1"/>
</dbReference>
<dbReference type="Gene3D" id="3.40.50.620">
    <property type="entry name" value="HUPs"/>
    <property type="match status" value="1"/>
</dbReference>
<dbReference type="HAMAP" id="MF_01428">
    <property type="entry name" value="Glu_Q_tRNA_synth"/>
    <property type="match status" value="1"/>
</dbReference>
<dbReference type="InterPro" id="IPR022380">
    <property type="entry name" value="Glu-Q_tRNA(Asp)_Synthase"/>
</dbReference>
<dbReference type="InterPro" id="IPR000924">
    <property type="entry name" value="Glu/Gln-tRNA-synth"/>
</dbReference>
<dbReference type="InterPro" id="IPR020058">
    <property type="entry name" value="Glu/Gln-tRNA-synth_Ib_cat-dom"/>
</dbReference>
<dbReference type="InterPro" id="IPR049940">
    <property type="entry name" value="GluQ/Sye"/>
</dbReference>
<dbReference type="InterPro" id="IPR014729">
    <property type="entry name" value="Rossmann-like_a/b/a_fold"/>
</dbReference>
<dbReference type="NCBIfam" id="NF004314">
    <property type="entry name" value="PRK05710.1-3"/>
    <property type="match status" value="1"/>
</dbReference>
<dbReference type="NCBIfam" id="TIGR03838">
    <property type="entry name" value="queuosine_YadB"/>
    <property type="match status" value="1"/>
</dbReference>
<dbReference type="PANTHER" id="PTHR43311">
    <property type="entry name" value="GLUTAMATE--TRNA LIGASE"/>
    <property type="match status" value="1"/>
</dbReference>
<dbReference type="PANTHER" id="PTHR43311:SF1">
    <property type="entry name" value="GLUTAMYL-Q TRNA(ASP) SYNTHETASE"/>
    <property type="match status" value="1"/>
</dbReference>
<dbReference type="Pfam" id="PF00749">
    <property type="entry name" value="tRNA-synt_1c"/>
    <property type="match status" value="1"/>
</dbReference>
<dbReference type="PRINTS" id="PR00987">
    <property type="entry name" value="TRNASYNTHGLU"/>
</dbReference>
<dbReference type="SUPFAM" id="SSF52374">
    <property type="entry name" value="Nucleotidylyl transferase"/>
    <property type="match status" value="1"/>
</dbReference>
<organism>
    <name type="scientific">Neisseria meningitidis serogroup C / serotype 2a (strain ATCC 700532 / DSM 15464 / FAM18)</name>
    <dbReference type="NCBI Taxonomy" id="272831"/>
    <lineage>
        <taxon>Bacteria</taxon>
        <taxon>Pseudomonadati</taxon>
        <taxon>Pseudomonadota</taxon>
        <taxon>Betaproteobacteria</taxon>
        <taxon>Neisseriales</taxon>
        <taxon>Neisseriaceae</taxon>
        <taxon>Neisseria</taxon>
    </lineage>
</organism>
<accession>A1KVT5</accession>
<proteinExistence type="inferred from homology"/>